<dbReference type="EC" id="6.1.1.12" evidence="1"/>
<dbReference type="EMBL" id="AJ248286">
    <property type="protein sequence ID" value="CAB49870.1"/>
    <property type="molecule type" value="Genomic_DNA"/>
</dbReference>
<dbReference type="EMBL" id="HE613800">
    <property type="protein sequence ID" value="CCE70368.1"/>
    <property type="molecule type" value="Genomic_DNA"/>
</dbReference>
<dbReference type="PIR" id="A75071">
    <property type="entry name" value="A75071"/>
</dbReference>
<dbReference type="RefSeq" id="WP_010868079.1">
    <property type="nucleotide sequence ID" value="NC_000868.1"/>
</dbReference>
<dbReference type="SMR" id="Q9V036"/>
<dbReference type="STRING" id="272844.PAB0646"/>
<dbReference type="KEGG" id="pab:PAB0646"/>
<dbReference type="PATRIC" id="fig|272844.11.peg.1014"/>
<dbReference type="eggNOG" id="arCOG00406">
    <property type="taxonomic scope" value="Archaea"/>
</dbReference>
<dbReference type="HOGENOM" id="CLU_004553_2_1_2"/>
<dbReference type="OrthoDB" id="5908at2157"/>
<dbReference type="PhylomeDB" id="Q9V036"/>
<dbReference type="Proteomes" id="UP000000810">
    <property type="component" value="Chromosome"/>
</dbReference>
<dbReference type="Proteomes" id="UP000009139">
    <property type="component" value="Chromosome"/>
</dbReference>
<dbReference type="GO" id="GO:0017101">
    <property type="term" value="C:aminoacyl-tRNA synthetase multienzyme complex"/>
    <property type="evidence" value="ECO:0007669"/>
    <property type="project" value="TreeGrafter"/>
</dbReference>
<dbReference type="GO" id="GO:0005829">
    <property type="term" value="C:cytosol"/>
    <property type="evidence" value="ECO:0007669"/>
    <property type="project" value="TreeGrafter"/>
</dbReference>
<dbReference type="GO" id="GO:0004815">
    <property type="term" value="F:aspartate-tRNA ligase activity"/>
    <property type="evidence" value="ECO:0007669"/>
    <property type="project" value="UniProtKB-UniRule"/>
</dbReference>
<dbReference type="GO" id="GO:0005524">
    <property type="term" value="F:ATP binding"/>
    <property type="evidence" value="ECO:0007669"/>
    <property type="project" value="UniProtKB-UniRule"/>
</dbReference>
<dbReference type="GO" id="GO:0000287">
    <property type="term" value="F:magnesium ion binding"/>
    <property type="evidence" value="ECO:0007669"/>
    <property type="project" value="UniProtKB-UniRule"/>
</dbReference>
<dbReference type="GO" id="GO:0003723">
    <property type="term" value="F:RNA binding"/>
    <property type="evidence" value="ECO:0007669"/>
    <property type="project" value="TreeGrafter"/>
</dbReference>
<dbReference type="GO" id="GO:0006422">
    <property type="term" value="P:aspartyl-tRNA aminoacylation"/>
    <property type="evidence" value="ECO:0007669"/>
    <property type="project" value="UniProtKB-UniRule"/>
</dbReference>
<dbReference type="CDD" id="cd00776">
    <property type="entry name" value="AsxRS_core"/>
    <property type="match status" value="1"/>
</dbReference>
<dbReference type="CDD" id="cd04316">
    <property type="entry name" value="ND_PkAspRS_like_N"/>
    <property type="match status" value="1"/>
</dbReference>
<dbReference type="FunFam" id="3.30.930.10:FF:000038">
    <property type="entry name" value="Aspartate--tRNA ligase"/>
    <property type="match status" value="1"/>
</dbReference>
<dbReference type="FunFam" id="2.40.50.140:FF:000324">
    <property type="entry name" value="Aspartate--tRNA(Asp/Asn) ligase"/>
    <property type="match status" value="1"/>
</dbReference>
<dbReference type="Gene3D" id="3.30.930.10">
    <property type="entry name" value="Bira Bifunctional Protein, Domain 2"/>
    <property type="match status" value="1"/>
</dbReference>
<dbReference type="Gene3D" id="2.40.50.140">
    <property type="entry name" value="Nucleic acid-binding proteins"/>
    <property type="match status" value="1"/>
</dbReference>
<dbReference type="HAMAP" id="MF_02075">
    <property type="entry name" value="Asp_tRNA_synth_type2"/>
    <property type="match status" value="1"/>
</dbReference>
<dbReference type="InterPro" id="IPR004364">
    <property type="entry name" value="Aa-tRNA-synt_II"/>
</dbReference>
<dbReference type="InterPro" id="IPR006195">
    <property type="entry name" value="aa-tRNA-synth_II"/>
</dbReference>
<dbReference type="InterPro" id="IPR045864">
    <property type="entry name" value="aa-tRNA-synth_II/BPL/LPL"/>
</dbReference>
<dbReference type="InterPro" id="IPR004523">
    <property type="entry name" value="Asp-tRNA_synthase_2"/>
</dbReference>
<dbReference type="InterPro" id="IPR002312">
    <property type="entry name" value="Asp/Asn-tRNA-synth_IIb"/>
</dbReference>
<dbReference type="InterPro" id="IPR012340">
    <property type="entry name" value="NA-bd_OB-fold"/>
</dbReference>
<dbReference type="InterPro" id="IPR004365">
    <property type="entry name" value="NA-bd_OB_tRNA"/>
</dbReference>
<dbReference type="NCBIfam" id="TIGR00458">
    <property type="entry name" value="aspS_nondisc"/>
    <property type="match status" value="1"/>
</dbReference>
<dbReference type="NCBIfam" id="NF003483">
    <property type="entry name" value="PRK05159.1"/>
    <property type="match status" value="1"/>
</dbReference>
<dbReference type="PANTHER" id="PTHR43450:SF1">
    <property type="entry name" value="ASPARTATE--TRNA LIGASE, CYTOPLASMIC"/>
    <property type="match status" value="1"/>
</dbReference>
<dbReference type="PANTHER" id="PTHR43450">
    <property type="entry name" value="ASPARTYL-TRNA SYNTHETASE"/>
    <property type="match status" value="1"/>
</dbReference>
<dbReference type="Pfam" id="PF00152">
    <property type="entry name" value="tRNA-synt_2"/>
    <property type="match status" value="1"/>
</dbReference>
<dbReference type="Pfam" id="PF01336">
    <property type="entry name" value="tRNA_anti-codon"/>
    <property type="match status" value="1"/>
</dbReference>
<dbReference type="PRINTS" id="PR01042">
    <property type="entry name" value="TRNASYNTHASP"/>
</dbReference>
<dbReference type="SUPFAM" id="SSF55681">
    <property type="entry name" value="Class II aaRS and biotin synthetases"/>
    <property type="match status" value="1"/>
</dbReference>
<dbReference type="SUPFAM" id="SSF50249">
    <property type="entry name" value="Nucleic acid-binding proteins"/>
    <property type="match status" value="1"/>
</dbReference>
<dbReference type="PROSITE" id="PS50862">
    <property type="entry name" value="AA_TRNA_LIGASE_II"/>
    <property type="match status" value="1"/>
</dbReference>
<sequence length="438" mass="50975">MLRTHYSSEITEELNGKKVKVAGWVQEVKDLGGIKFIWIRDREGIVQVTAPKKKVPQEIFKLIPKLNSEDVIVVEGIVNFTPKAKLGFEIIPEKLEVISKAKTPLPLDPTGKVKAELDTRLDNRFMDLRNPRVMSIFKIRSSVFRATREFFYKEGFIEIHTPKIIATATEGGTELFPLKYFENDAFLAQSPQLYKQMMMSTGLDKVFEIGPIFRAEEHNTTRHLNEAWSIDAEMAFIESEEEVMDLLERLILYVINYVRENNEKELKILEFELNEPKKPFPRITYDEALEILSDLGKEIPWGEDIDTEGEKLLGKYMLENEGAELYFIYRYPSEAKPFYIMKYEDKPEVCKAFDLEYRGVEISSGGQREHRHDILVEQIREKGLNPESFEFYLRAFEYGMPPHGGFGLGAERLIMRMLDIGNIREVILFPRDRRRLVP</sequence>
<comment type="function">
    <text evidence="1">Catalyzes the attachment of L-aspartate to tRNA(Asp) in a two-step reaction: L-aspartate is first activated by ATP to form Asp-AMP and then transferred to the acceptor end of tRNA(Asp).</text>
</comment>
<comment type="catalytic activity">
    <reaction evidence="1">
        <text>tRNA(Asp) + L-aspartate + ATP = L-aspartyl-tRNA(Asp) + AMP + diphosphate</text>
        <dbReference type="Rhea" id="RHEA:19649"/>
        <dbReference type="Rhea" id="RHEA-COMP:9660"/>
        <dbReference type="Rhea" id="RHEA-COMP:9678"/>
        <dbReference type="ChEBI" id="CHEBI:29991"/>
        <dbReference type="ChEBI" id="CHEBI:30616"/>
        <dbReference type="ChEBI" id="CHEBI:33019"/>
        <dbReference type="ChEBI" id="CHEBI:78442"/>
        <dbReference type="ChEBI" id="CHEBI:78516"/>
        <dbReference type="ChEBI" id="CHEBI:456215"/>
        <dbReference type="EC" id="6.1.1.12"/>
    </reaction>
</comment>
<comment type="cofactor">
    <cofactor evidence="1">
        <name>Mg(2+)</name>
        <dbReference type="ChEBI" id="CHEBI:18420"/>
    </cofactor>
    <text evidence="1">Binds 3 Mg(2+) cations per subunit. The strongest magnesium site (Mg1) is bound to the beta- and gamma-phosphates of ATP and four water molecules complete its coordination sphere.</text>
</comment>
<comment type="subunit">
    <text evidence="1">Homodimer.</text>
</comment>
<comment type="subcellular location">
    <subcellularLocation>
        <location evidence="1">Cytoplasm</location>
    </subcellularLocation>
</comment>
<comment type="similarity">
    <text evidence="1">Belongs to the class-II aminoacyl-tRNA synthetase family. Type 2 subfamily.</text>
</comment>
<reference key="1">
    <citation type="journal article" date="2003" name="Mol. Microbiol.">
        <title>An integrated analysis of the genome of the hyperthermophilic archaeon Pyrococcus abyssi.</title>
        <authorList>
            <person name="Cohen G.N."/>
            <person name="Barbe V."/>
            <person name="Flament D."/>
            <person name="Galperin M."/>
            <person name="Heilig R."/>
            <person name="Lecompte O."/>
            <person name="Poch O."/>
            <person name="Prieur D."/>
            <person name="Querellou J."/>
            <person name="Ripp R."/>
            <person name="Thierry J.-C."/>
            <person name="Van der Oost J."/>
            <person name="Weissenbach J."/>
            <person name="Zivanovic Y."/>
            <person name="Forterre P."/>
        </authorList>
    </citation>
    <scope>NUCLEOTIDE SEQUENCE [LARGE SCALE GENOMIC DNA]</scope>
    <source>
        <strain>GE5 / Orsay</strain>
    </source>
</reference>
<reference key="2">
    <citation type="journal article" date="2012" name="Curr. Microbiol.">
        <title>Re-annotation of two hyperthermophilic archaea Pyrococcus abyssi GE5 and Pyrococcus furiosus DSM 3638.</title>
        <authorList>
            <person name="Gao J."/>
            <person name="Wang J."/>
        </authorList>
    </citation>
    <scope>GENOME REANNOTATION</scope>
    <source>
        <strain>GE5 / Orsay</strain>
    </source>
</reference>
<proteinExistence type="inferred from homology"/>
<organism>
    <name type="scientific">Pyrococcus abyssi (strain GE5 / Orsay)</name>
    <dbReference type="NCBI Taxonomy" id="272844"/>
    <lineage>
        <taxon>Archaea</taxon>
        <taxon>Methanobacteriati</taxon>
        <taxon>Methanobacteriota</taxon>
        <taxon>Thermococci</taxon>
        <taxon>Thermococcales</taxon>
        <taxon>Thermococcaceae</taxon>
        <taxon>Pyrococcus</taxon>
    </lineage>
</organism>
<protein>
    <recommendedName>
        <fullName evidence="1">Aspartate--tRNA(Asp) ligase</fullName>
        <ecNumber evidence="1">6.1.1.12</ecNumber>
    </recommendedName>
    <alternativeName>
        <fullName evidence="1">Aspartyl-tRNA synthetase</fullName>
        <shortName evidence="1">AspRS</shortName>
    </alternativeName>
    <alternativeName>
        <fullName evidence="1">Discriminating aspartyl-tRNA synthetase</fullName>
        <shortName evidence="1">D-AspRS</shortName>
    </alternativeName>
</protein>
<feature type="chain" id="PRO_0000111001" description="Aspartate--tRNA(Asp) ligase">
    <location>
        <begin position="1"/>
        <end position="438"/>
    </location>
</feature>
<feature type="region of interest" description="Aspartate" evidence="1">
    <location>
        <begin position="192"/>
        <end position="195"/>
    </location>
</feature>
<feature type="binding site" evidence="1">
    <location>
        <position position="170"/>
    </location>
    <ligand>
        <name>L-aspartate</name>
        <dbReference type="ChEBI" id="CHEBI:29991"/>
    </ligand>
</feature>
<feature type="binding site" evidence="1">
    <location>
        <begin position="214"/>
        <end position="216"/>
    </location>
    <ligand>
        <name>ATP</name>
        <dbReference type="ChEBI" id="CHEBI:30616"/>
    </ligand>
</feature>
<feature type="binding site" evidence="1">
    <location>
        <position position="214"/>
    </location>
    <ligand>
        <name>L-aspartate</name>
        <dbReference type="ChEBI" id="CHEBI:29991"/>
    </ligand>
</feature>
<feature type="binding site" evidence="1">
    <location>
        <begin position="222"/>
        <end position="224"/>
    </location>
    <ligand>
        <name>ATP</name>
        <dbReference type="ChEBI" id="CHEBI:30616"/>
    </ligand>
</feature>
<feature type="binding site" evidence="1">
    <location>
        <position position="361"/>
    </location>
    <ligand>
        <name>ATP</name>
        <dbReference type="ChEBI" id="CHEBI:30616"/>
    </ligand>
</feature>
<feature type="binding site" evidence="1">
    <location>
        <position position="361"/>
    </location>
    <ligand>
        <name>Mg(2+)</name>
        <dbReference type="ChEBI" id="CHEBI:18420"/>
        <label>2</label>
    </ligand>
</feature>
<feature type="binding site" evidence="1">
    <location>
        <position position="361"/>
    </location>
    <ligand>
        <name>Mg(2+)</name>
        <dbReference type="ChEBI" id="CHEBI:18420"/>
        <label>3</label>
    </ligand>
</feature>
<feature type="binding site" evidence="1">
    <location>
        <position position="364"/>
    </location>
    <ligand>
        <name>L-aspartate</name>
        <dbReference type="ChEBI" id="CHEBI:29991"/>
    </ligand>
</feature>
<feature type="binding site" evidence="1">
    <location>
        <position position="364"/>
    </location>
    <ligand>
        <name>Mg(2+)</name>
        <dbReference type="ChEBI" id="CHEBI:18420"/>
        <label>2</label>
    </ligand>
</feature>
<feature type="binding site" evidence="1">
    <location>
        <position position="368"/>
    </location>
    <ligand>
        <name>L-aspartate</name>
        <dbReference type="ChEBI" id="CHEBI:29991"/>
    </ligand>
</feature>
<feature type="binding site" evidence="1">
    <location>
        <begin position="409"/>
        <end position="412"/>
    </location>
    <ligand>
        <name>ATP</name>
        <dbReference type="ChEBI" id="CHEBI:30616"/>
    </ligand>
</feature>
<feature type="site" description="Important for tRNA discrimination" evidence="1">
    <location>
        <position position="85"/>
    </location>
</feature>
<name>SYD_PYRAB</name>
<accession>Q9V036</accession>
<accession>G8ZIC7</accession>
<evidence type="ECO:0000255" key="1">
    <source>
        <dbReference type="HAMAP-Rule" id="MF_02075"/>
    </source>
</evidence>
<keyword id="KW-0030">Aminoacyl-tRNA synthetase</keyword>
<keyword id="KW-0067">ATP-binding</keyword>
<keyword id="KW-0963">Cytoplasm</keyword>
<keyword id="KW-0436">Ligase</keyword>
<keyword id="KW-0460">Magnesium</keyword>
<keyword id="KW-0479">Metal-binding</keyword>
<keyword id="KW-0547">Nucleotide-binding</keyword>
<keyword id="KW-0648">Protein biosynthesis</keyword>
<gene>
    <name evidence="1" type="primary">aspS</name>
    <name type="ordered locus">PYRAB09620</name>
    <name type="ORF">PAB0646</name>
</gene>